<organism>
    <name type="scientific">Dictyoglomus turgidum (strain DSM 6724 / Z-1310)</name>
    <dbReference type="NCBI Taxonomy" id="515635"/>
    <lineage>
        <taxon>Bacteria</taxon>
        <taxon>Pseudomonadati</taxon>
        <taxon>Dictyoglomota</taxon>
        <taxon>Dictyoglomia</taxon>
        <taxon>Dictyoglomales</taxon>
        <taxon>Dictyoglomaceae</taxon>
        <taxon>Dictyoglomus</taxon>
    </lineage>
</organism>
<evidence type="ECO:0000255" key="1">
    <source>
        <dbReference type="HAMAP-Rule" id="MF_00407"/>
    </source>
</evidence>
<proteinExistence type="inferred from homology"/>
<accession>B8DZX8</accession>
<keyword id="KW-0067">ATP-binding</keyword>
<keyword id="KW-0131">Cell cycle</keyword>
<keyword id="KW-0132">Cell division</keyword>
<keyword id="KW-0227">DNA damage</keyword>
<keyword id="KW-0233">DNA recombination</keyword>
<keyword id="KW-0234">DNA repair</keyword>
<keyword id="KW-0235">DNA replication</keyword>
<keyword id="KW-0436">Ligase</keyword>
<keyword id="KW-0460">Magnesium</keyword>
<keyword id="KW-0479">Metal-binding</keyword>
<keyword id="KW-0547">Nucleotide-binding</keyword>
<keyword id="KW-1185">Reference proteome</keyword>
<dbReference type="EC" id="6.5.1.1" evidence="1"/>
<dbReference type="EMBL" id="CP001251">
    <property type="protein sequence ID" value="ACK42061.1"/>
    <property type="molecule type" value="Genomic_DNA"/>
</dbReference>
<dbReference type="RefSeq" id="WP_012583146.1">
    <property type="nucleotide sequence ID" value="NC_011661.1"/>
</dbReference>
<dbReference type="RefSeq" id="YP_002352675.1">
    <property type="nucleotide sequence ID" value="NC_011661.1"/>
</dbReference>
<dbReference type="SMR" id="B8DZX8"/>
<dbReference type="STRING" id="515635.Dtur_0780"/>
<dbReference type="EnsemblBacteria" id="ACK42061">
    <property type="protein sequence ID" value="ACK42061"/>
    <property type="gene ID" value="Dtur_0780"/>
</dbReference>
<dbReference type="KEGG" id="dtu:Dtur_0780"/>
<dbReference type="eggNOG" id="COG1793">
    <property type="taxonomic scope" value="Bacteria"/>
</dbReference>
<dbReference type="HOGENOM" id="CLU_005138_6_0_0"/>
<dbReference type="InParanoid" id="B8DZX8"/>
<dbReference type="OrthoDB" id="9802472at2"/>
<dbReference type="Proteomes" id="UP000007719">
    <property type="component" value="Chromosome"/>
</dbReference>
<dbReference type="GO" id="GO:0005524">
    <property type="term" value="F:ATP binding"/>
    <property type="evidence" value="ECO:0007669"/>
    <property type="project" value="UniProtKB-UniRule"/>
</dbReference>
<dbReference type="GO" id="GO:0003677">
    <property type="term" value="F:DNA binding"/>
    <property type="evidence" value="ECO:0007669"/>
    <property type="project" value="InterPro"/>
</dbReference>
<dbReference type="GO" id="GO:0003910">
    <property type="term" value="F:DNA ligase (ATP) activity"/>
    <property type="evidence" value="ECO:0000318"/>
    <property type="project" value="GO_Central"/>
</dbReference>
<dbReference type="GO" id="GO:0046872">
    <property type="term" value="F:metal ion binding"/>
    <property type="evidence" value="ECO:0007669"/>
    <property type="project" value="UniProtKB-KW"/>
</dbReference>
<dbReference type="GO" id="GO:0051301">
    <property type="term" value="P:cell division"/>
    <property type="evidence" value="ECO:0007669"/>
    <property type="project" value="UniProtKB-KW"/>
</dbReference>
<dbReference type="GO" id="GO:0071897">
    <property type="term" value="P:DNA biosynthetic process"/>
    <property type="evidence" value="ECO:0007669"/>
    <property type="project" value="InterPro"/>
</dbReference>
<dbReference type="GO" id="GO:0006310">
    <property type="term" value="P:DNA recombination"/>
    <property type="evidence" value="ECO:0007669"/>
    <property type="project" value="UniProtKB-UniRule"/>
</dbReference>
<dbReference type="GO" id="GO:0006281">
    <property type="term" value="P:DNA repair"/>
    <property type="evidence" value="ECO:0007669"/>
    <property type="project" value="UniProtKB-UniRule"/>
</dbReference>
<dbReference type="GO" id="GO:0006273">
    <property type="term" value="P:lagging strand elongation"/>
    <property type="evidence" value="ECO:0000318"/>
    <property type="project" value="GO_Central"/>
</dbReference>
<dbReference type="CDD" id="cd07901">
    <property type="entry name" value="Adenylation_DNA_ligase_Arch_LigB"/>
    <property type="match status" value="1"/>
</dbReference>
<dbReference type="CDD" id="cd07893">
    <property type="entry name" value="OBF_DNA_ligase"/>
    <property type="match status" value="1"/>
</dbReference>
<dbReference type="FunFam" id="1.10.3260.10:FF:000007">
    <property type="entry name" value="DNA ligase"/>
    <property type="match status" value="1"/>
</dbReference>
<dbReference type="FunFam" id="3.30.470.30:FF:000012">
    <property type="entry name" value="Probable DNA ligase"/>
    <property type="match status" value="1"/>
</dbReference>
<dbReference type="Gene3D" id="1.10.3260.10">
    <property type="entry name" value="DNA ligase, ATP-dependent, N-terminal domain"/>
    <property type="match status" value="1"/>
</dbReference>
<dbReference type="Gene3D" id="3.30.470.30">
    <property type="entry name" value="DNA ligase/mRNA capping enzyme"/>
    <property type="match status" value="1"/>
</dbReference>
<dbReference type="Gene3D" id="2.40.50.140">
    <property type="entry name" value="Nucleic acid-binding proteins"/>
    <property type="match status" value="1"/>
</dbReference>
<dbReference type="HAMAP" id="MF_00407">
    <property type="entry name" value="DNA_ligase"/>
    <property type="match status" value="1"/>
</dbReference>
<dbReference type="InterPro" id="IPR050191">
    <property type="entry name" value="ATP-dep_DNA_ligase"/>
</dbReference>
<dbReference type="InterPro" id="IPR022865">
    <property type="entry name" value="DNA_ligae_ATP-dep_bac/arc"/>
</dbReference>
<dbReference type="InterPro" id="IPR000977">
    <property type="entry name" value="DNA_ligase_ATP-dep"/>
</dbReference>
<dbReference type="InterPro" id="IPR012309">
    <property type="entry name" value="DNA_ligase_ATP-dep_C"/>
</dbReference>
<dbReference type="InterPro" id="IPR012310">
    <property type="entry name" value="DNA_ligase_ATP-dep_cent"/>
</dbReference>
<dbReference type="InterPro" id="IPR016059">
    <property type="entry name" value="DNA_ligase_ATP-dep_CS"/>
</dbReference>
<dbReference type="InterPro" id="IPR012308">
    <property type="entry name" value="DNA_ligase_ATP-dep_N"/>
</dbReference>
<dbReference type="InterPro" id="IPR036599">
    <property type="entry name" value="DNA_ligase_N_sf"/>
</dbReference>
<dbReference type="InterPro" id="IPR012340">
    <property type="entry name" value="NA-bd_OB-fold"/>
</dbReference>
<dbReference type="NCBIfam" id="TIGR00574">
    <property type="entry name" value="dnl1"/>
    <property type="match status" value="1"/>
</dbReference>
<dbReference type="PANTHER" id="PTHR45674:SF4">
    <property type="entry name" value="DNA LIGASE 1"/>
    <property type="match status" value="1"/>
</dbReference>
<dbReference type="PANTHER" id="PTHR45674">
    <property type="entry name" value="DNA LIGASE 1/3 FAMILY MEMBER"/>
    <property type="match status" value="1"/>
</dbReference>
<dbReference type="Pfam" id="PF04679">
    <property type="entry name" value="DNA_ligase_A_C"/>
    <property type="match status" value="1"/>
</dbReference>
<dbReference type="Pfam" id="PF01068">
    <property type="entry name" value="DNA_ligase_A_M"/>
    <property type="match status" value="1"/>
</dbReference>
<dbReference type="Pfam" id="PF04675">
    <property type="entry name" value="DNA_ligase_A_N"/>
    <property type="match status" value="1"/>
</dbReference>
<dbReference type="SUPFAM" id="SSF117018">
    <property type="entry name" value="ATP-dependent DNA ligase DNA-binding domain"/>
    <property type="match status" value="1"/>
</dbReference>
<dbReference type="SUPFAM" id="SSF56091">
    <property type="entry name" value="DNA ligase/mRNA capping enzyme, catalytic domain"/>
    <property type="match status" value="1"/>
</dbReference>
<dbReference type="SUPFAM" id="SSF50249">
    <property type="entry name" value="Nucleic acid-binding proteins"/>
    <property type="match status" value="1"/>
</dbReference>
<dbReference type="PROSITE" id="PS00697">
    <property type="entry name" value="DNA_LIGASE_A1"/>
    <property type="match status" value="1"/>
</dbReference>
<dbReference type="PROSITE" id="PS00333">
    <property type="entry name" value="DNA_LIGASE_A2"/>
    <property type="match status" value="1"/>
</dbReference>
<dbReference type="PROSITE" id="PS50160">
    <property type="entry name" value="DNA_LIGASE_A3"/>
    <property type="match status" value="1"/>
</dbReference>
<sequence length="582" mass="66609">MLFGELAQYFEKIEKTTKRNEMMEILADLFKRVDKEEIEKIIYLLNGRVAPDYEKIEFGMSEKLVLRAMALALKVPIFDLEKVYKEVGDLGELIIKYSQNEGKDLTVVETFNTLFEIANLSGEGSVDAKVNRLAFLINSLTPQGGKYLVRIVLGKLRLGVGEPTVMDALSFAKVKDKSLRPFIERAFNITSDLGYVAKVFWEGGIEALKKIKVEVGKPIRMALAERVSKVEEIVKRLGKCAIEPKFDGFRCQIHKKENNVRIFSRNLEDNTHMFPDLVEAVLKQFSDKNVIIEGEAISYNPETGEFYPFQVTVQRKRKYNISEMVELYPLQLFAFDILYLNGEDITSLPYIRRRQKLEEAISEGEKIFVTKNIITNDPKEIQAFFEECITEGLEGIVAKRLDAPYQAGIRNFNWIKLKRSYQGHLADTVDCVILGYFKGRGHRAKFGIGALLVGVYDDERDLFKTVAKIGTGPTEEEWVRFREVLDEIKLESKPNNVESLIEPDVWVEPKYVVVIQADEITRSPVHTCGRELDGLGYALRFPRVIGFVREDKGPYDATTVKEILEMFRGQKKEKVEEDSDNL</sequence>
<name>DNLI_DICTD</name>
<gene>
    <name evidence="1" type="primary">lig</name>
    <name type="ordered locus">Dtur_0780</name>
</gene>
<comment type="function">
    <text evidence="1">DNA ligase that seals nicks in double-stranded DNA during DNA replication, DNA recombination and DNA repair.</text>
</comment>
<comment type="catalytic activity">
    <reaction evidence="1">
        <text>ATP + (deoxyribonucleotide)n-3'-hydroxyl + 5'-phospho-(deoxyribonucleotide)m = (deoxyribonucleotide)n+m + AMP + diphosphate.</text>
        <dbReference type="EC" id="6.5.1.1"/>
    </reaction>
</comment>
<comment type="cofactor">
    <cofactor evidence="1">
        <name>Mg(2+)</name>
        <dbReference type="ChEBI" id="CHEBI:18420"/>
    </cofactor>
</comment>
<comment type="similarity">
    <text evidence="1">Belongs to the ATP-dependent DNA ligase family.</text>
</comment>
<feature type="chain" id="PRO_1000189919" description="Probable DNA ligase">
    <location>
        <begin position="1"/>
        <end position="582"/>
    </location>
</feature>
<feature type="active site" description="N6-AMP-lysine intermediate" evidence="1">
    <location>
        <position position="245"/>
    </location>
</feature>
<feature type="binding site" evidence="1">
    <location>
        <position position="243"/>
    </location>
    <ligand>
        <name>ATP</name>
        <dbReference type="ChEBI" id="CHEBI:30616"/>
    </ligand>
</feature>
<feature type="binding site" evidence="1">
    <location>
        <position position="250"/>
    </location>
    <ligand>
        <name>ATP</name>
        <dbReference type="ChEBI" id="CHEBI:30616"/>
    </ligand>
</feature>
<feature type="binding site" evidence="1">
    <location>
        <position position="265"/>
    </location>
    <ligand>
        <name>ATP</name>
        <dbReference type="ChEBI" id="CHEBI:30616"/>
    </ligand>
</feature>
<feature type="binding site" evidence="1">
    <location>
        <position position="295"/>
    </location>
    <ligand>
        <name>ATP</name>
        <dbReference type="ChEBI" id="CHEBI:30616"/>
    </ligand>
</feature>
<feature type="binding site" evidence="1">
    <location>
        <position position="335"/>
    </location>
    <ligand>
        <name>ATP</name>
        <dbReference type="ChEBI" id="CHEBI:30616"/>
    </ligand>
</feature>
<feature type="binding site" evidence="1">
    <location>
        <position position="410"/>
    </location>
    <ligand>
        <name>ATP</name>
        <dbReference type="ChEBI" id="CHEBI:30616"/>
    </ligand>
</feature>
<feature type="binding site" evidence="1">
    <location>
        <position position="416"/>
    </location>
    <ligand>
        <name>ATP</name>
        <dbReference type="ChEBI" id="CHEBI:30616"/>
    </ligand>
</feature>
<protein>
    <recommendedName>
        <fullName evidence="1">Probable DNA ligase</fullName>
        <ecNumber evidence="1">6.5.1.1</ecNumber>
    </recommendedName>
    <alternativeName>
        <fullName evidence="1">Polydeoxyribonucleotide synthase [ATP]</fullName>
    </alternativeName>
</protein>
<reference key="1">
    <citation type="journal article" date="2016" name="Front. Microbiol.">
        <title>The complete genome sequence of hyperthermophile Dictyoglomus turgidum DSM 6724 reveals a specialized carbohydrate fermentor.</title>
        <authorList>
            <person name="Brumm P.J."/>
            <person name="Gowda K."/>
            <person name="Robb F.T."/>
            <person name="Mead D.A."/>
        </authorList>
    </citation>
    <scope>NUCLEOTIDE SEQUENCE [LARGE SCALE GENOMIC DNA]</scope>
    <source>
        <strain>DSM 6724 / Z-1310</strain>
    </source>
</reference>